<dbReference type="EMBL" id="CU928164">
    <property type="protein sequence ID" value="CAR19227.1"/>
    <property type="molecule type" value="Genomic_DNA"/>
</dbReference>
<dbReference type="RefSeq" id="WP_000027720.1">
    <property type="nucleotide sequence ID" value="NC_011750.1"/>
</dbReference>
<dbReference type="RefSeq" id="YP_002409037.1">
    <property type="nucleotide sequence ID" value="NC_011750.1"/>
</dbReference>
<dbReference type="SMR" id="B7NUB8"/>
<dbReference type="STRING" id="585057.ECIAI39_3108"/>
<dbReference type="KEGG" id="ect:ECIAI39_3108"/>
<dbReference type="PATRIC" id="fig|585057.6.peg.3223"/>
<dbReference type="HOGENOM" id="CLU_055275_0_0_6"/>
<dbReference type="Proteomes" id="UP000000749">
    <property type="component" value="Chromosome"/>
</dbReference>
<dbReference type="GO" id="GO:0005829">
    <property type="term" value="C:cytosol"/>
    <property type="evidence" value="ECO:0007669"/>
    <property type="project" value="TreeGrafter"/>
</dbReference>
<dbReference type="GO" id="GO:0008199">
    <property type="term" value="F:ferric iron binding"/>
    <property type="evidence" value="ECO:0007669"/>
    <property type="project" value="TreeGrafter"/>
</dbReference>
<dbReference type="GO" id="GO:0051604">
    <property type="term" value="P:protein maturation"/>
    <property type="evidence" value="ECO:0007669"/>
    <property type="project" value="TreeGrafter"/>
</dbReference>
<dbReference type="CDD" id="cd16341">
    <property type="entry name" value="FdhE"/>
    <property type="match status" value="1"/>
</dbReference>
<dbReference type="FunFam" id="3.90.1670.10:FF:000001">
    <property type="entry name" value="Protein FdhE"/>
    <property type="match status" value="1"/>
</dbReference>
<dbReference type="Gene3D" id="3.90.1670.10">
    <property type="entry name" value="FdhE-like domain"/>
    <property type="match status" value="1"/>
</dbReference>
<dbReference type="HAMAP" id="MF_00611">
    <property type="entry name" value="FdeH"/>
    <property type="match status" value="1"/>
</dbReference>
<dbReference type="InterPro" id="IPR024064">
    <property type="entry name" value="FdhE-like_sf"/>
</dbReference>
<dbReference type="InterPro" id="IPR056796">
    <property type="entry name" value="FdhE_C"/>
</dbReference>
<dbReference type="InterPro" id="IPR056797">
    <property type="entry name" value="FdhE_central"/>
</dbReference>
<dbReference type="InterPro" id="IPR056774">
    <property type="entry name" value="FdhE_N"/>
</dbReference>
<dbReference type="InterPro" id="IPR006452">
    <property type="entry name" value="Formate_DH_accessory"/>
</dbReference>
<dbReference type="NCBIfam" id="TIGR01562">
    <property type="entry name" value="FdhE"/>
    <property type="match status" value="1"/>
</dbReference>
<dbReference type="NCBIfam" id="NF002925">
    <property type="entry name" value="PRK03564.1"/>
    <property type="match status" value="1"/>
</dbReference>
<dbReference type="PANTHER" id="PTHR37689">
    <property type="entry name" value="PROTEIN FDHE"/>
    <property type="match status" value="1"/>
</dbReference>
<dbReference type="PANTHER" id="PTHR37689:SF1">
    <property type="entry name" value="PROTEIN FDHE"/>
    <property type="match status" value="1"/>
</dbReference>
<dbReference type="Pfam" id="PF24860">
    <property type="entry name" value="FdhE_C"/>
    <property type="match status" value="1"/>
</dbReference>
<dbReference type="Pfam" id="PF24859">
    <property type="entry name" value="FdhE_central"/>
    <property type="match status" value="1"/>
</dbReference>
<dbReference type="Pfam" id="PF04216">
    <property type="entry name" value="FdhE_N"/>
    <property type="match status" value="1"/>
</dbReference>
<dbReference type="PIRSF" id="PIRSF018296">
    <property type="entry name" value="Format_dh_formtn"/>
    <property type="match status" value="1"/>
</dbReference>
<dbReference type="SUPFAM" id="SSF144020">
    <property type="entry name" value="FdhE-like"/>
    <property type="match status" value="1"/>
</dbReference>
<evidence type="ECO:0000255" key="1">
    <source>
        <dbReference type="HAMAP-Rule" id="MF_00611"/>
    </source>
</evidence>
<feature type="chain" id="PRO_1000130355" description="Protein FdhE">
    <location>
        <begin position="1"/>
        <end position="309"/>
    </location>
</feature>
<gene>
    <name evidence="1" type="primary">fdhE</name>
    <name type="ordered locus">ECIAI39_3108</name>
</gene>
<proteinExistence type="inferred from homology"/>
<organism>
    <name type="scientific">Escherichia coli O7:K1 (strain IAI39 / ExPEC)</name>
    <dbReference type="NCBI Taxonomy" id="585057"/>
    <lineage>
        <taxon>Bacteria</taxon>
        <taxon>Pseudomonadati</taxon>
        <taxon>Pseudomonadota</taxon>
        <taxon>Gammaproteobacteria</taxon>
        <taxon>Enterobacterales</taxon>
        <taxon>Enterobacteriaceae</taxon>
        <taxon>Escherichia</taxon>
    </lineage>
</organism>
<accession>B7NUB8</accession>
<protein>
    <recommendedName>
        <fullName evidence="1">Protein FdhE</fullName>
    </recommendedName>
</protein>
<comment type="function">
    <text evidence="1">Necessary for formate dehydrogenase activity.</text>
</comment>
<comment type="subcellular location">
    <subcellularLocation>
        <location evidence="1">Cytoplasm</location>
    </subcellularLocation>
</comment>
<comment type="similarity">
    <text evidence="1">Belongs to the FdhE family.</text>
</comment>
<name>FDHE_ECO7I</name>
<keyword id="KW-0963">Cytoplasm</keyword>
<sequence>MSIRIIPQDELGSSEKRTADMIPPLLFPRLKNLYNRRAERLRELAENNPLGDYLRFAALIAHAQEVVLYDHPLEMDLTTRIKEASAQGKPPLDIHVLPRDKHWQKLLMALIAELKPEMSGPALAVIENLEKASTQELEDMASALFASDFSSVSSDKAPFIWAALSLYWAQMANLIPGKARAEYGEQRQYCPVCGSMPVSSMVQIGTTQGLRYLHCNLCETEWHVVRVKCSNCEQSGKLHYWSLDDEQAAIKAESCDDCGTYLKILYQEKEPKVEAVADDLASLVLDARMEQEGYARSSINPFLFPGEGE</sequence>
<reference key="1">
    <citation type="journal article" date="2009" name="PLoS Genet.">
        <title>Organised genome dynamics in the Escherichia coli species results in highly diverse adaptive paths.</title>
        <authorList>
            <person name="Touchon M."/>
            <person name="Hoede C."/>
            <person name="Tenaillon O."/>
            <person name="Barbe V."/>
            <person name="Baeriswyl S."/>
            <person name="Bidet P."/>
            <person name="Bingen E."/>
            <person name="Bonacorsi S."/>
            <person name="Bouchier C."/>
            <person name="Bouvet O."/>
            <person name="Calteau A."/>
            <person name="Chiapello H."/>
            <person name="Clermont O."/>
            <person name="Cruveiller S."/>
            <person name="Danchin A."/>
            <person name="Diard M."/>
            <person name="Dossat C."/>
            <person name="Karoui M.E."/>
            <person name="Frapy E."/>
            <person name="Garry L."/>
            <person name="Ghigo J.M."/>
            <person name="Gilles A.M."/>
            <person name="Johnson J."/>
            <person name="Le Bouguenec C."/>
            <person name="Lescat M."/>
            <person name="Mangenot S."/>
            <person name="Martinez-Jehanne V."/>
            <person name="Matic I."/>
            <person name="Nassif X."/>
            <person name="Oztas S."/>
            <person name="Petit M.A."/>
            <person name="Pichon C."/>
            <person name="Rouy Z."/>
            <person name="Ruf C.S."/>
            <person name="Schneider D."/>
            <person name="Tourret J."/>
            <person name="Vacherie B."/>
            <person name="Vallenet D."/>
            <person name="Medigue C."/>
            <person name="Rocha E.P.C."/>
            <person name="Denamur E."/>
        </authorList>
    </citation>
    <scope>NUCLEOTIDE SEQUENCE [LARGE SCALE GENOMIC DNA]</scope>
    <source>
        <strain>IAI39 / ExPEC</strain>
    </source>
</reference>